<protein>
    <recommendedName>
        <fullName>Hairy/enhancer-of-split related with YRPW motif-like protein</fullName>
    </recommendedName>
    <alternativeName>
        <fullName>Hairy and enhancer of split-related protein 3</fullName>
    </alternativeName>
    <alternativeName>
        <fullName>Hairy-related transcription factor 3</fullName>
        <shortName>HRT-3</shortName>
        <shortName>mHRT3</shortName>
    </alternativeName>
</protein>
<organism>
    <name type="scientific">Mus musculus</name>
    <name type="common">Mouse</name>
    <dbReference type="NCBI Taxonomy" id="10090"/>
    <lineage>
        <taxon>Eukaryota</taxon>
        <taxon>Metazoa</taxon>
        <taxon>Chordata</taxon>
        <taxon>Craniata</taxon>
        <taxon>Vertebrata</taxon>
        <taxon>Euteleostomi</taxon>
        <taxon>Mammalia</taxon>
        <taxon>Eutheria</taxon>
        <taxon>Euarchontoglires</taxon>
        <taxon>Glires</taxon>
        <taxon>Rodentia</taxon>
        <taxon>Myomorpha</taxon>
        <taxon>Muroidea</taxon>
        <taxon>Muridae</taxon>
        <taxon>Murinae</taxon>
        <taxon>Mus</taxon>
        <taxon>Mus</taxon>
    </lineage>
</organism>
<dbReference type="EMBL" id="AF172288">
    <property type="protein sequence ID" value="AAF14547.1"/>
    <property type="molecule type" value="mRNA"/>
</dbReference>
<dbReference type="EMBL" id="AJ271868">
    <property type="protein sequence ID" value="CAB71347.1"/>
    <property type="molecule type" value="mRNA"/>
</dbReference>
<dbReference type="EMBL" id="AB093590">
    <property type="protein sequence ID" value="BAC55067.1"/>
    <property type="molecule type" value="mRNA"/>
</dbReference>
<dbReference type="EMBL" id="AK004697">
    <property type="protein sequence ID" value="BAB23482.1"/>
    <property type="molecule type" value="mRNA"/>
</dbReference>
<dbReference type="EMBL" id="AK028596">
    <property type="protein sequence ID" value="BAC26024.1"/>
    <property type="molecule type" value="mRNA"/>
</dbReference>
<dbReference type="EMBL" id="AK080822">
    <property type="protein sequence ID" value="BAC38037.1"/>
    <property type="molecule type" value="mRNA"/>
</dbReference>
<dbReference type="EMBL" id="AL606934">
    <property type="status" value="NOT_ANNOTATED_CDS"/>
    <property type="molecule type" value="Genomic_DNA"/>
</dbReference>
<dbReference type="EMBL" id="BC130263">
    <property type="protein sequence ID" value="AAI30264.1"/>
    <property type="molecule type" value="mRNA"/>
</dbReference>
<dbReference type="CCDS" id="CCDS18613.1"/>
<dbReference type="RefSeq" id="NP_038933.2">
    <property type="nucleotide sequence ID" value="NM_013905.3"/>
</dbReference>
<dbReference type="SMR" id="Q9DBX7"/>
<dbReference type="FunCoup" id="Q9DBX7">
    <property type="interactions" value="526"/>
</dbReference>
<dbReference type="IntAct" id="Q9DBX7">
    <property type="interactions" value="2"/>
</dbReference>
<dbReference type="STRING" id="10090.ENSMUSP00000040576"/>
<dbReference type="PhosphoSitePlus" id="Q9DBX7"/>
<dbReference type="SwissPalm" id="Q9DBX7"/>
<dbReference type="PaxDb" id="10090-ENSMUSP00000040576"/>
<dbReference type="ProteomicsDB" id="269783"/>
<dbReference type="Antibodypedia" id="643">
    <property type="antibodies" value="332 antibodies from 26 providers"/>
</dbReference>
<dbReference type="DNASU" id="56198"/>
<dbReference type="Ensembl" id="ENSMUST00000040821.5">
    <property type="protein sequence ID" value="ENSMUSP00000040576.5"/>
    <property type="gene ID" value="ENSMUSG00000032744.5"/>
</dbReference>
<dbReference type="GeneID" id="56198"/>
<dbReference type="KEGG" id="mmu:56198"/>
<dbReference type="UCSC" id="uc008uoz.1">
    <property type="organism name" value="mouse"/>
</dbReference>
<dbReference type="AGR" id="MGI:1860511"/>
<dbReference type="CTD" id="26508"/>
<dbReference type="MGI" id="MGI:1860511">
    <property type="gene designation" value="Heyl"/>
</dbReference>
<dbReference type="VEuPathDB" id="HostDB:ENSMUSG00000032744"/>
<dbReference type="eggNOG" id="KOG4304">
    <property type="taxonomic scope" value="Eukaryota"/>
</dbReference>
<dbReference type="GeneTree" id="ENSGT00940000161351"/>
<dbReference type="HOGENOM" id="CLU_048294_1_1_1"/>
<dbReference type="InParanoid" id="Q9DBX7"/>
<dbReference type="OMA" id="AFPVWPW"/>
<dbReference type="OrthoDB" id="6371181at2759"/>
<dbReference type="PhylomeDB" id="Q9DBX7"/>
<dbReference type="TreeFam" id="TF323617"/>
<dbReference type="BioGRID-ORCS" id="56198">
    <property type="hits" value="3 hits in 78 CRISPR screens"/>
</dbReference>
<dbReference type="PRO" id="PR:Q9DBX7"/>
<dbReference type="Proteomes" id="UP000000589">
    <property type="component" value="Chromosome 4"/>
</dbReference>
<dbReference type="RNAct" id="Q9DBX7">
    <property type="molecule type" value="protein"/>
</dbReference>
<dbReference type="Bgee" id="ENSMUSG00000032744">
    <property type="expression patterns" value="Expressed in ascending aorta and 219 other cell types or tissues"/>
</dbReference>
<dbReference type="GO" id="GO:0005737">
    <property type="term" value="C:cytoplasm"/>
    <property type="evidence" value="ECO:0000314"/>
    <property type="project" value="UniProtKB"/>
</dbReference>
<dbReference type="GO" id="GO:0005654">
    <property type="term" value="C:nucleoplasm"/>
    <property type="evidence" value="ECO:0000304"/>
    <property type="project" value="Reactome"/>
</dbReference>
<dbReference type="GO" id="GO:0005634">
    <property type="term" value="C:nucleus"/>
    <property type="evidence" value="ECO:0000250"/>
    <property type="project" value="UniProtKB"/>
</dbReference>
<dbReference type="GO" id="GO:0005667">
    <property type="term" value="C:transcription regulator complex"/>
    <property type="evidence" value="ECO:0000250"/>
    <property type="project" value="MGI"/>
</dbReference>
<dbReference type="GO" id="GO:0050683">
    <property type="term" value="F:AF-1 domain binding"/>
    <property type="evidence" value="ECO:0007669"/>
    <property type="project" value="Ensembl"/>
</dbReference>
<dbReference type="GO" id="GO:0001228">
    <property type="term" value="F:DNA-binding transcription activator activity, RNA polymerase II-specific"/>
    <property type="evidence" value="ECO:0000314"/>
    <property type="project" value="UniProtKB"/>
</dbReference>
<dbReference type="GO" id="GO:0003700">
    <property type="term" value="F:DNA-binding transcription factor activity"/>
    <property type="evidence" value="ECO:0000250"/>
    <property type="project" value="UniProtKB"/>
</dbReference>
<dbReference type="GO" id="GO:0001227">
    <property type="term" value="F:DNA-binding transcription repressor activity, RNA polymerase II-specific"/>
    <property type="evidence" value="ECO:0000314"/>
    <property type="project" value="UniProtKB"/>
</dbReference>
<dbReference type="GO" id="GO:0042803">
    <property type="term" value="F:protein homodimerization activity"/>
    <property type="evidence" value="ECO:0000314"/>
    <property type="project" value="UniProtKB"/>
</dbReference>
<dbReference type="GO" id="GO:0000978">
    <property type="term" value="F:RNA polymerase II cis-regulatory region sequence-specific DNA binding"/>
    <property type="evidence" value="ECO:0000314"/>
    <property type="project" value="UniProtKB"/>
</dbReference>
<dbReference type="GO" id="GO:0043565">
    <property type="term" value="F:sequence-specific DNA binding"/>
    <property type="evidence" value="ECO:0000314"/>
    <property type="project" value="MGI"/>
</dbReference>
<dbReference type="GO" id="GO:0003181">
    <property type="term" value="P:atrioventricular valve morphogenesis"/>
    <property type="evidence" value="ECO:0000316"/>
    <property type="project" value="BHF-UCL"/>
</dbReference>
<dbReference type="GO" id="GO:0060317">
    <property type="term" value="P:cardiac epithelial to mesenchymal transition"/>
    <property type="evidence" value="ECO:0000316"/>
    <property type="project" value="BHF-UCL"/>
</dbReference>
<dbReference type="GO" id="GO:0003208">
    <property type="term" value="P:cardiac ventricle morphogenesis"/>
    <property type="evidence" value="ECO:0000315"/>
    <property type="project" value="BHF-UCL"/>
</dbReference>
<dbReference type="GO" id="GO:0071773">
    <property type="term" value="P:cellular response to BMP stimulus"/>
    <property type="evidence" value="ECO:0000270"/>
    <property type="project" value="UniProtKB"/>
</dbReference>
<dbReference type="GO" id="GO:0003203">
    <property type="term" value="P:endocardial cushion morphogenesis"/>
    <property type="evidence" value="ECO:0000316"/>
    <property type="project" value="BHF-UCL"/>
</dbReference>
<dbReference type="GO" id="GO:0003198">
    <property type="term" value="P:epithelial to mesenchymal transition involved in endocardial cushion formation"/>
    <property type="evidence" value="ECO:0000316"/>
    <property type="project" value="MGI"/>
</dbReference>
<dbReference type="GO" id="GO:0032835">
    <property type="term" value="P:glomerulus development"/>
    <property type="evidence" value="ECO:0000270"/>
    <property type="project" value="UniProtKB"/>
</dbReference>
<dbReference type="GO" id="GO:0014031">
    <property type="term" value="P:mesenchymal cell development"/>
    <property type="evidence" value="ECO:0000316"/>
    <property type="project" value="BHF-UCL"/>
</dbReference>
<dbReference type="GO" id="GO:0060766">
    <property type="term" value="P:negative regulation of androgen receptor signaling pathway"/>
    <property type="evidence" value="ECO:0000250"/>
    <property type="project" value="UniProtKB"/>
</dbReference>
<dbReference type="GO" id="GO:0043433">
    <property type="term" value="P:negative regulation of DNA-binding transcription factor activity"/>
    <property type="evidence" value="ECO:0000250"/>
    <property type="project" value="UniProtKB"/>
</dbReference>
<dbReference type="GO" id="GO:0045892">
    <property type="term" value="P:negative regulation of DNA-templated transcription"/>
    <property type="evidence" value="ECO:0000315"/>
    <property type="project" value="UniProtKB"/>
</dbReference>
<dbReference type="GO" id="GO:0010629">
    <property type="term" value="P:negative regulation of gene expression"/>
    <property type="evidence" value="ECO:0000315"/>
    <property type="project" value="MGI"/>
</dbReference>
<dbReference type="GO" id="GO:0000122">
    <property type="term" value="P:negative regulation of transcription by RNA polymerase II"/>
    <property type="evidence" value="ECO:0000314"/>
    <property type="project" value="ARUK-UCL"/>
</dbReference>
<dbReference type="GO" id="GO:0007219">
    <property type="term" value="P:Notch signaling pathway"/>
    <property type="evidence" value="ECO:0000250"/>
    <property type="project" value="UniProtKB"/>
</dbReference>
<dbReference type="GO" id="GO:0003151">
    <property type="term" value="P:outflow tract morphogenesis"/>
    <property type="evidence" value="ECO:0000316"/>
    <property type="project" value="BHF-UCL"/>
</dbReference>
<dbReference type="GO" id="GO:0007422">
    <property type="term" value="P:peripheral nervous system development"/>
    <property type="evidence" value="ECO:0000303"/>
    <property type="project" value="UniProtKB"/>
</dbReference>
<dbReference type="GO" id="GO:0045666">
    <property type="term" value="P:positive regulation of neuron differentiation"/>
    <property type="evidence" value="ECO:0000314"/>
    <property type="project" value="UniProtKB"/>
</dbReference>
<dbReference type="GO" id="GO:0045944">
    <property type="term" value="P:positive regulation of transcription by RNA polymerase II"/>
    <property type="evidence" value="ECO:0000314"/>
    <property type="project" value="ARUK-UCL"/>
</dbReference>
<dbReference type="GO" id="GO:0072014">
    <property type="term" value="P:proximal tubule development"/>
    <property type="evidence" value="ECO:0000270"/>
    <property type="project" value="UniProtKB"/>
</dbReference>
<dbReference type="GO" id="GO:0003184">
    <property type="term" value="P:pulmonary valve morphogenesis"/>
    <property type="evidence" value="ECO:0000316"/>
    <property type="project" value="BHF-UCL"/>
</dbReference>
<dbReference type="GO" id="GO:0006357">
    <property type="term" value="P:regulation of transcription by RNA polymerase II"/>
    <property type="evidence" value="ECO:0000250"/>
    <property type="project" value="MGI"/>
</dbReference>
<dbReference type="GO" id="GO:0035914">
    <property type="term" value="P:skeletal muscle cell differentiation"/>
    <property type="evidence" value="ECO:0000315"/>
    <property type="project" value="MGI"/>
</dbReference>
<dbReference type="GO" id="GO:0060412">
    <property type="term" value="P:ventricular septum morphogenesis"/>
    <property type="evidence" value="ECO:0000316"/>
    <property type="project" value="BHF-UCL"/>
</dbReference>
<dbReference type="CDD" id="cd11447">
    <property type="entry name" value="bHLH-O_HEYL"/>
    <property type="match status" value="1"/>
</dbReference>
<dbReference type="FunFam" id="4.10.280.10:FF:000012">
    <property type="entry name" value="hairy/enhancer-of-split related with YRPW motif protein 1"/>
    <property type="match status" value="1"/>
</dbReference>
<dbReference type="Gene3D" id="6.10.250.980">
    <property type="match status" value="1"/>
</dbReference>
<dbReference type="Gene3D" id="4.10.280.10">
    <property type="entry name" value="Helix-loop-helix DNA-binding domain"/>
    <property type="match status" value="1"/>
</dbReference>
<dbReference type="InterPro" id="IPR011598">
    <property type="entry name" value="bHLH_dom"/>
</dbReference>
<dbReference type="InterPro" id="IPR050370">
    <property type="entry name" value="HES_HEY"/>
</dbReference>
<dbReference type="InterPro" id="IPR036638">
    <property type="entry name" value="HLH_DNA-bd_sf"/>
</dbReference>
<dbReference type="InterPro" id="IPR003650">
    <property type="entry name" value="Orange_dom"/>
</dbReference>
<dbReference type="PANTHER" id="PTHR10985">
    <property type="entry name" value="BASIC HELIX-LOOP-HELIX TRANSCRIPTION FACTOR, HES-RELATED"/>
    <property type="match status" value="1"/>
</dbReference>
<dbReference type="Pfam" id="PF07527">
    <property type="entry name" value="Hairy_orange"/>
    <property type="match status" value="1"/>
</dbReference>
<dbReference type="Pfam" id="PF00010">
    <property type="entry name" value="HLH"/>
    <property type="match status" value="1"/>
</dbReference>
<dbReference type="SMART" id="SM00353">
    <property type="entry name" value="HLH"/>
    <property type="match status" value="1"/>
</dbReference>
<dbReference type="SMART" id="SM00511">
    <property type="entry name" value="ORANGE"/>
    <property type="match status" value="1"/>
</dbReference>
<dbReference type="SUPFAM" id="SSF47459">
    <property type="entry name" value="HLH, helix-loop-helix DNA-binding domain"/>
    <property type="match status" value="1"/>
</dbReference>
<dbReference type="SUPFAM" id="SSF158457">
    <property type="entry name" value="Orange domain-like"/>
    <property type="match status" value="1"/>
</dbReference>
<dbReference type="PROSITE" id="PS50888">
    <property type="entry name" value="BHLH"/>
    <property type="match status" value="1"/>
</dbReference>
<dbReference type="PROSITE" id="PS51054">
    <property type="entry name" value="ORANGE"/>
    <property type="match status" value="1"/>
</dbReference>
<sequence length="326" mass="34929">MKRPRAPSGSDGESDGPIDVGQENDLSQMARPLTTPSPSQMQARKKRRGIIEKRRRDRINSSLSELRRLVPTAFEKQGSSKLEKAEVLQMTVDHLKMLHASGGTGFFDARALAVDFRSIGFRECLTEVIRYLGVLEGPSSHADPVRIRLLSHLKSYAAEMEPSPTTTSALAFPVWPWSFLHSCPGLPSLNSQLAILGRVPGPVLPSISSPPYPISALRSAPVHRPAGTIPPTRRNLLPSRGVTSTQRAHLPERPAAPPPTALDARAARSIVPIPPCSPTTAPGAGKSDDNVSGSISSPCPSGPTGRPAGAVFYHSWVSEITEIGAF</sequence>
<name>HEYL_MOUSE</name>
<comment type="function">
    <text evidence="1 8 9">Transcriptional repressor which binds preferentially to the canonical E box sequence 5'-CACGTG-3' (By similarity). Downstream effector of Notch signaling required for cardiovascular development. Specifically required for the Notch-induced endocardial epithelial to mesenchymal transition, which is itself criticial for cardiac valve and septum development. Represses transcription by the cardiac transcriptional activators GATA4 and GATA6.</text>
</comment>
<comment type="subunit">
    <text evidence="1 8 9">Interacts with HES1, HDAC1, NCOR1 and SIN3A (By similarity). Self-associates. Interacts with GATA4, GATA6, HEY1 and HEY2.</text>
</comment>
<comment type="subcellular location">
    <subcellularLocation>
        <location evidence="2 3">Nucleus</location>
    </subcellularLocation>
</comment>
<comment type="tissue specificity">
    <text evidence="5">Expressed in heart and at lower levels in brain, lung, muscle, ovary and testis.</text>
</comment>
<comment type="developmental stage">
    <text evidence="6 7 9">Expressed in the presmitic mesoderm, the somites, the developing peripheral nervous system and arterial smooth muscle. Expressed in atrioventricular cushions from 9.5 dpc to 12.5 dpc. Also expressed in developing retina.</text>
</comment>
<comment type="induction">
    <text>By activation of the Notch signaling pathway.</text>
</comment>
<comment type="miscellaneous">
    <text>Expression in nascent somites is reduced in mice lacking Notch signaling.</text>
</comment>
<comment type="similarity">
    <text evidence="10">Belongs to the HEY family.</text>
</comment>
<keyword id="KW-0217">Developmental protein</keyword>
<keyword id="KW-0238">DNA-binding</keyword>
<keyword id="KW-0914">Notch signaling pathway</keyword>
<keyword id="KW-0539">Nucleus</keyword>
<keyword id="KW-1185">Reference proteome</keyword>
<keyword id="KW-0678">Repressor</keyword>
<keyword id="KW-0804">Transcription</keyword>
<keyword id="KW-0805">Transcription regulation</keyword>
<evidence type="ECO:0000250" key="1"/>
<evidence type="ECO:0000255" key="2">
    <source>
        <dbReference type="PROSITE-ProRule" id="PRU00380"/>
    </source>
</evidence>
<evidence type="ECO:0000255" key="3">
    <source>
        <dbReference type="PROSITE-ProRule" id="PRU00981"/>
    </source>
</evidence>
<evidence type="ECO:0000256" key="4">
    <source>
        <dbReference type="SAM" id="MobiDB-lite"/>
    </source>
</evidence>
<evidence type="ECO:0000269" key="5">
    <source>
    </source>
</evidence>
<evidence type="ECO:0000269" key="6">
    <source>
    </source>
</evidence>
<evidence type="ECO:0000269" key="7">
    <source>
    </source>
</evidence>
<evidence type="ECO:0000269" key="8">
    <source>
    </source>
</evidence>
<evidence type="ECO:0000269" key="9">
    <source>
    </source>
</evidence>
<evidence type="ECO:0000305" key="10"/>
<accession>Q9DBX7</accession>
<accession>Q9JJV6</accession>
<accession>Q9QXW8</accession>
<reference key="1">
    <citation type="journal article" date="1999" name="Dev. Biol.">
        <title>HRT1, HRT2 and HRT3: a new subclass of bHLH transcription factors marking specific cardiac, somitic and pharyngeal arch segments.</title>
        <authorList>
            <person name="Nakagawa O."/>
            <person name="Nakagawa M."/>
            <person name="Richardson J.A."/>
            <person name="Olson E.N."/>
            <person name="Srivastava D."/>
        </authorList>
    </citation>
    <scope>NUCLEOTIDE SEQUENCE [MRNA]</scope>
</reference>
<reference key="2">
    <citation type="journal article" date="2000" name="Genomics">
        <title>Characterization of the human and mouse HEY1, HEY2, and HEYL genes: cloning, mapping, and mutation screening of a new bHLH gene family.</title>
        <authorList>
            <person name="Steidl C."/>
            <person name="Leimeister C."/>
            <person name="Klamt B."/>
            <person name="Maier M."/>
            <person name="Nanda I."/>
            <person name="Dixon M."/>
            <person name="Clarke R."/>
            <person name="Schmid M."/>
            <person name="Gessler M."/>
        </authorList>
    </citation>
    <scope>NUCLEOTIDE SEQUENCE [MRNA]</scope>
    <scope>TISSUE SPECIFICITY</scope>
</reference>
<reference key="3">
    <citation type="submission" date="2002-10" db="EMBL/GenBank/DDBJ databases">
        <title>Cloning of hesr2 gene.</title>
        <authorList>
            <person name="Kokubo H."/>
            <person name="Johnson R.L."/>
        </authorList>
    </citation>
    <scope>NUCLEOTIDE SEQUENCE [MRNA]</scope>
</reference>
<reference key="4">
    <citation type="journal article" date="2005" name="Science">
        <title>The transcriptional landscape of the mammalian genome.</title>
        <authorList>
            <person name="Carninci P."/>
            <person name="Kasukawa T."/>
            <person name="Katayama S."/>
            <person name="Gough J."/>
            <person name="Frith M.C."/>
            <person name="Maeda N."/>
            <person name="Oyama R."/>
            <person name="Ravasi T."/>
            <person name="Lenhard B."/>
            <person name="Wells C."/>
            <person name="Kodzius R."/>
            <person name="Shimokawa K."/>
            <person name="Bajic V.B."/>
            <person name="Brenner S.E."/>
            <person name="Batalov S."/>
            <person name="Forrest A.R."/>
            <person name="Zavolan M."/>
            <person name="Davis M.J."/>
            <person name="Wilming L.G."/>
            <person name="Aidinis V."/>
            <person name="Allen J.E."/>
            <person name="Ambesi-Impiombato A."/>
            <person name="Apweiler R."/>
            <person name="Aturaliya R.N."/>
            <person name="Bailey T.L."/>
            <person name="Bansal M."/>
            <person name="Baxter L."/>
            <person name="Beisel K.W."/>
            <person name="Bersano T."/>
            <person name="Bono H."/>
            <person name="Chalk A.M."/>
            <person name="Chiu K.P."/>
            <person name="Choudhary V."/>
            <person name="Christoffels A."/>
            <person name="Clutterbuck D.R."/>
            <person name="Crowe M.L."/>
            <person name="Dalla E."/>
            <person name="Dalrymple B.P."/>
            <person name="de Bono B."/>
            <person name="Della Gatta G."/>
            <person name="di Bernardo D."/>
            <person name="Down T."/>
            <person name="Engstrom P."/>
            <person name="Fagiolini M."/>
            <person name="Faulkner G."/>
            <person name="Fletcher C.F."/>
            <person name="Fukushima T."/>
            <person name="Furuno M."/>
            <person name="Futaki S."/>
            <person name="Gariboldi M."/>
            <person name="Georgii-Hemming P."/>
            <person name="Gingeras T.R."/>
            <person name="Gojobori T."/>
            <person name="Green R.E."/>
            <person name="Gustincich S."/>
            <person name="Harbers M."/>
            <person name="Hayashi Y."/>
            <person name="Hensch T.K."/>
            <person name="Hirokawa N."/>
            <person name="Hill D."/>
            <person name="Huminiecki L."/>
            <person name="Iacono M."/>
            <person name="Ikeo K."/>
            <person name="Iwama A."/>
            <person name="Ishikawa T."/>
            <person name="Jakt M."/>
            <person name="Kanapin A."/>
            <person name="Katoh M."/>
            <person name="Kawasawa Y."/>
            <person name="Kelso J."/>
            <person name="Kitamura H."/>
            <person name="Kitano H."/>
            <person name="Kollias G."/>
            <person name="Krishnan S.P."/>
            <person name="Kruger A."/>
            <person name="Kummerfeld S.K."/>
            <person name="Kurochkin I.V."/>
            <person name="Lareau L.F."/>
            <person name="Lazarevic D."/>
            <person name="Lipovich L."/>
            <person name="Liu J."/>
            <person name="Liuni S."/>
            <person name="McWilliam S."/>
            <person name="Madan Babu M."/>
            <person name="Madera M."/>
            <person name="Marchionni L."/>
            <person name="Matsuda H."/>
            <person name="Matsuzawa S."/>
            <person name="Miki H."/>
            <person name="Mignone F."/>
            <person name="Miyake S."/>
            <person name="Morris K."/>
            <person name="Mottagui-Tabar S."/>
            <person name="Mulder N."/>
            <person name="Nakano N."/>
            <person name="Nakauchi H."/>
            <person name="Ng P."/>
            <person name="Nilsson R."/>
            <person name="Nishiguchi S."/>
            <person name="Nishikawa S."/>
            <person name="Nori F."/>
            <person name="Ohara O."/>
            <person name="Okazaki Y."/>
            <person name="Orlando V."/>
            <person name="Pang K.C."/>
            <person name="Pavan W.J."/>
            <person name="Pavesi G."/>
            <person name="Pesole G."/>
            <person name="Petrovsky N."/>
            <person name="Piazza S."/>
            <person name="Reed J."/>
            <person name="Reid J.F."/>
            <person name="Ring B.Z."/>
            <person name="Ringwald M."/>
            <person name="Rost B."/>
            <person name="Ruan Y."/>
            <person name="Salzberg S.L."/>
            <person name="Sandelin A."/>
            <person name="Schneider C."/>
            <person name="Schoenbach C."/>
            <person name="Sekiguchi K."/>
            <person name="Semple C.A."/>
            <person name="Seno S."/>
            <person name="Sessa L."/>
            <person name="Sheng Y."/>
            <person name="Shibata Y."/>
            <person name="Shimada H."/>
            <person name="Shimada K."/>
            <person name="Silva D."/>
            <person name="Sinclair B."/>
            <person name="Sperling S."/>
            <person name="Stupka E."/>
            <person name="Sugiura K."/>
            <person name="Sultana R."/>
            <person name="Takenaka Y."/>
            <person name="Taki K."/>
            <person name="Tammoja K."/>
            <person name="Tan S.L."/>
            <person name="Tang S."/>
            <person name="Taylor M.S."/>
            <person name="Tegner J."/>
            <person name="Teichmann S.A."/>
            <person name="Ueda H.R."/>
            <person name="van Nimwegen E."/>
            <person name="Verardo R."/>
            <person name="Wei C.L."/>
            <person name="Yagi K."/>
            <person name="Yamanishi H."/>
            <person name="Zabarovsky E."/>
            <person name="Zhu S."/>
            <person name="Zimmer A."/>
            <person name="Hide W."/>
            <person name="Bult C."/>
            <person name="Grimmond S.M."/>
            <person name="Teasdale R.D."/>
            <person name="Liu E.T."/>
            <person name="Brusic V."/>
            <person name="Quackenbush J."/>
            <person name="Wahlestedt C."/>
            <person name="Mattick J.S."/>
            <person name="Hume D.A."/>
            <person name="Kai C."/>
            <person name="Sasaki D."/>
            <person name="Tomaru Y."/>
            <person name="Fukuda S."/>
            <person name="Kanamori-Katayama M."/>
            <person name="Suzuki M."/>
            <person name="Aoki J."/>
            <person name="Arakawa T."/>
            <person name="Iida J."/>
            <person name="Imamura K."/>
            <person name="Itoh M."/>
            <person name="Kato T."/>
            <person name="Kawaji H."/>
            <person name="Kawagashira N."/>
            <person name="Kawashima T."/>
            <person name="Kojima M."/>
            <person name="Kondo S."/>
            <person name="Konno H."/>
            <person name="Nakano K."/>
            <person name="Ninomiya N."/>
            <person name="Nishio T."/>
            <person name="Okada M."/>
            <person name="Plessy C."/>
            <person name="Shibata K."/>
            <person name="Shiraki T."/>
            <person name="Suzuki S."/>
            <person name="Tagami M."/>
            <person name="Waki K."/>
            <person name="Watahiki A."/>
            <person name="Okamura-Oho Y."/>
            <person name="Suzuki H."/>
            <person name="Kawai J."/>
            <person name="Hayashizaki Y."/>
        </authorList>
    </citation>
    <scope>NUCLEOTIDE SEQUENCE [LARGE SCALE MRNA]</scope>
    <source>
        <strain>C57BL/6J</strain>
        <tissue>Corpora quadrigemina</tissue>
        <tissue>Lung</tissue>
        <tissue>Skin</tissue>
    </source>
</reference>
<reference key="5">
    <citation type="journal article" date="2009" name="PLoS Biol.">
        <title>Lineage-specific biology revealed by a finished genome assembly of the mouse.</title>
        <authorList>
            <person name="Church D.M."/>
            <person name="Goodstadt L."/>
            <person name="Hillier L.W."/>
            <person name="Zody M.C."/>
            <person name="Goldstein S."/>
            <person name="She X."/>
            <person name="Bult C.J."/>
            <person name="Agarwala R."/>
            <person name="Cherry J.L."/>
            <person name="DiCuccio M."/>
            <person name="Hlavina W."/>
            <person name="Kapustin Y."/>
            <person name="Meric P."/>
            <person name="Maglott D."/>
            <person name="Birtle Z."/>
            <person name="Marques A.C."/>
            <person name="Graves T."/>
            <person name="Zhou S."/>
            <person name="Teague B."/>
            <person name="Potamousis K."/>
            <person name="Churas C."/>
            <person name="Place M."/>
            <person name="Herschleb J."/>
            <person name="Runnheim R."/>
            <person name="Forrest D."/>
            <person name="Amos-Landgraf J."/>
            <person name="Schwartz D.C."/>
            <person name="Cheng Z."/>
            <person name="Lindblad-Toh K."/>
            <person name="Eichler E.E."/>
            <person name="Ponting C.P."/>
        </authorList>
    </citation>
    <scope>NUCLEOTIDE SEQUENCE [LARGE SCALE GENOMIC DNA]</scope>
    <source>
        <strain>C57BL/6J</strain>
    </source>
</reference>
<reference key="6">
    <citation type="journal article" date="2004" name="Genome Res.">
        <title>The status, quality, and expansion of the NIH full-length cDNA project: the Mammalian Gene Collection (MGC).</title>
        <authorList>
            <consortium name="The MGC Project Team"/>
        </authorList>
    </citation>
    <scope>NUCLEOTIDE SEQUENCE [LARGE SCALE MRNA]</scope>
</reference>
<reference key="7">
    <citation type="journal article" date="2000" name="Mech. Dev.">
        <title>Analysis of HeyL expression in wild-type and Notch pathway mutant mouse embryos.</title>
        <authorList>
            <person name="Leimeister C."/>
            <person name="Schumacher N."/>
            <person name="Steidl C."/>
            <person name="Gessler M."/>
        </authorList>
    </citation>
    <scope>DEVELOPMENTAL STAGE</scope>
</reference>
<reference key="8">
    <citation type="journal article" date="2001" name="J. Neurosci.">
        <title>The basic helix-loop-helix gene hesr2 promotes gliogenesis in mouse retina.</title>
        <authorList>
            <person name="Satow T."/>
            <person name="Bae S.-K."/>
            <person name="Inoue T."/>
            <person name="Inoue C."/>
            <person name="Miyoshi G."/>
            <person name="Tomita K."/>
            <person name="Bessho Y."/>
            <person name="Hashimoto N."/>
            <person name="Kageyama R."/>
        </authorList>
    </citation>
    <scope>DEVELOPMENTAL STAGE</scope>
</reference>
<reference key="9">
    <citation type="journal article" date="2005" name="Mol. Cell. Biol.">
        <title>Hey basic helix-loop-helix transcription factors are repressors of GATA4 and GATA6 and restrict expression of the GATA target gene ANF in fetal hearts.</title>
        <authorList>
            <person name="Fischer A."/>
            <person name="Klattig J."/>
            <person name="Kneitz B."/>
            <person name="Diez H."/>
            <person name="Maier M."/>
            <person name="Holtmann B."/>
            <person name="Englert C."/>
            <person name="Gessler M."/>
        </authorList>
    </citation>
    <scope>FUNCTION</scope>
    <scope>INTERACTION WITH GATA4 AND GATA6</scope>
</reference>
<reference key="10">
    <citation type="journal article" date="2007" name="Circ. Res.">
        <title>Combined loss of Hey1 and HeyL causes congenital heart defects because of impaired epithelial to mesenchymal transition.</title>
        <authorList>
            <person name="Fischer A."/>
            <person name="Steidl C."/>
            <person name="Wagner T.U."/>
            <person name="Lang E."/>
            <person name="Jakob P.M."/>
            <person name="Friedl P."/>
            <person name="Knobeloch K.-P."/>
            <person name="Gessler M."/>
        </authorList>
    </citation>
    <scope>FUNCTION</scope>
    <scope>SELF-ASSOCIATION</scope>
    <scope>INTERACTION WITH HEY1 AND HEY2</scope>
    <scope>DEVELOPMENTAL STAGE</scope>
</reference>
<gene>
    <name type="primary">Heyl</name>
    <name type="synonym">Hesr3</name>
    <name type="synonym">Hrt3</name>
</gene>
<proteinExistence type="evidence at protein level"/>
<feature type="chain" id="PRO_0000286430" description="Hairy/enhancer-of-split related with YRPW motif-like protein">
    <location>
        <begin position="1"/>
        <end position="326"/>
    </location>
</feature>
<feature type="domain" description="bHLH" evidence="3">
    <location>
        <begin position="43"/>
        <end position="98"/>
    </location>
</feature>
<feature type="domain" description="Orange" evidence="2">
    <location>
        <begin position="116"/>
        <end position="153"/>
    </location>
</feature>
<feature type="region of interest" description="Disordered" evidence="4">
    <location>
        <begin position="1"/>
        <end position="56"/>
    </location>
</feature>
<feature type="region of interest" description="Transcriptional repression and interaction with NCOR1 and SIN3A" evidence="1">
    <location>
        <begin position="42"/>
        <end position="111"/>
    </location>
</feature>
<feature type="region of interest" description="Disordered" evidence="4">
    <location>
        <begin position="223"/>
        <end position="260"/>
    </location>
</feature>
<feature type="region of interest" description="Disordered" evidence="4">
    <location>
        <begin position="272"/>
        <end position="306"/>
    </location>
</feature>
<feature type="compositionally biased region" description="Low complexity" evidence="4">
    <location>
        <begin position="292"/>
        <end position="305"/>
    </location>
</feature>
<feature type="sequence conflict" description="In Ref. 4; BAB23482." evidence="10" ref="4">
    <original>M</original>
    <variation>V</variation>
    <location>
        <position position="29"/>
    </location>
</feature>
<feature type="sequence conflict" description="In Ref. 1; AAF14547." evidence="10" ref="1">
    <original>G</original>
    <variation>S</variation>
    <location>
        <position position="201"/>
    </location>
</feature>